<comment type="similarity">
    <text evidence="1">Belongs to the universal ribosomal protein uS2 family.</text>
</comment>
<dbReference type="EMBL" id="CP000463">
    <property type="protein sequence ID" value="ABJ06491.1"/>
    <property type="molecule type" value="Genomic_DNA"/>
</dbReference>
<dbReference type="SMR" id="Q07NJ3"/>
<dbReference type="STRING" id="316055.RPE_2553"/>
<dbReference type="KEGG" id="rpe:RPE_2553"/>
<dbReference type="eggNOG" id="COG0052">
    <property type="taxonomic scope" value="Bacteria"/>
</dbReference>
<dbReference type="HOGENOM" id="CLU_040318_2_1_5"/>
<dbReference type="OrthoDB" id="9808036at2"/>
<dbReference type="GO" id="GO:0022627">
    <property type="term" value="C:cytosolic small ribosomal subunit"/>
    <property type="evidence" value="ECO:0007669"/>
    <property type="project" value="TreeGrafter"/>
</dbReference>
<dbReference type="GO" id="GO:0003735">
    <property type="term" value="F:structural constituent of ribosome"/>
    <property type="evidence" value="ECO:0007669"/>
    <property type="project" value="InterPro"/>
</dbReference>
<dbReference type="GO" id="GO:0006412">
    <property type="term" value="P:translation"/>
    <property type="evidence" value="ECO:0007669"/>
    <property type="project" value="UniProtKB-UniRule"/>
</dbReference>
<dbReference type="CDD" id="cd01425">
    <property type="entry name" value="RPS2"/>
    <property type="match status" value="1"/>
</dbReference>
<dbReference type="FunFam" id="1.10.287.610:FF:000004">
    <property type="entry name" value="30S ribosomal protein S2"/>
    <property type="match status" value="1"/>
</dbReference>
<dbReference type="Gene3D" id="3.40.50.10490">
    <property type="entry name" value="Glucose-6-phosphate isomerase like protein, domain 1"/>
    <property type="match status" value="1"/>
</dbReference>
<dbReference type="Gene3D" id="1.10.287.610">
    <property type="entry name" value="Helix hairpin bin"/>
    <property type="match status" value="1"/>
</dbReference>
<dbReference type="HAMAP" id="MF_00291_B">
    <property type="entry name" value="Ribosomal_uS2_B"/>
    <property type="match status" value="1"/>
</dbReference>
<dbReference type="InterPro" id="IPR001865">
    <property type="entry name" value="Ribosomal_uS2"/>
</dbReference>
<dbReference type="InterPro" id="IPR005706">
    <property type="entry name" value="Ribosomal_uS2_bac/mit/plastid"/>
</dbReference>
<dbReference type="InterPro" id="IPR018130">
    <property type="entry name" value="Ribosomal_uS2_CS"/>
</dbReference>
<dbReference type="InterPro" id="IPR023591">
    <property type="entry name" value="Ribosomal_uS2_flav_dom_sf"/>
</dbReference>
<dbReference type="NCBIfam" id="NF008966">
    <property type="entry name" value="PRK12311.1"/>
    <property type="match status" value="1"/>
</dbReference>
<dbReference type="NCBIfam" id="TIGR01011">
    <property type="entry name" value="rpsB_bact"/>
    <property type="match status" value="1"/>
</dbReference>
<dbReference type="PANTHER" id="PTHR12534">
    <property type="entry name" value="30S RIBOSOMAL PROTEIN S2 PROKARYOTIC AND ORGANELLAR"/>
    <property type="match status" value="1"/>
</dbReference>
<dbReference type="PANTHER" id="PTHR12534:SF0">
    <property type="entry name" value="SMALL RIBOSOMAL SUBUNIT PROTEIN US2M"/>
    <property type="match status" value="1"/>
</dbReference>
<dbReference type="Pfam" id="PF00318">
    <property type="entry name" value="Ribosomal_S2"/>
    <property type="match status" value="1"/>
</dbReference>
<dbReference type="PRINTS" id="PR00395">
    <property type="entry name" value="RIBOSOMALS2"/>
</dbReference>
<dbReference type="SUPFAM" id="SSF52313">
    <property type="entry name" value="Ribosomal protein S2"/>
    <property type="match status" value="1"/>
</dbReference>
<dbReference type="PROSITE" id="PS00962">
    <property type="entry name" value="RIBOSOMAL_S2_1"/>
    <property type="match status" value="1"/>
</dbReference>
<dbReference type="PROSITE" id="PS00963">
    <property type="entry name" value="RIBOSOMAL_S2_2"/>
    <property type="match status" value="1"/>
</dbReference>
<keyword id="KW-0687">Ribonucleoprotein</keyword>
<keyword id="KW-0689">Ribosomal protein</keyword>
<gene>
    <name evidence="1" type="primary">rpsB</name>
    <name type="ordered locus">RPE_2553</name>
</gene>
<protein>
    <recommendedName>
        <fullName evidence="1">Small ribosomal subunit protein uS2</fullName>
    </recommendedName>
    <alternativeName>
        <fullName evidence="2">30S ribosomal protein S2</fullName>
    </alternativeName>
</protein>
<evidence type="ECO:0000255" key="1">
    <source>
        <dbReference type="HAMAP-Rule" id="MF_00291"/>
    </source>
</evidence>
<evidence type="ECO:0000305" key="2"/>
<feature type="chain" id="PRO_1000004047" description="Small ribosomal subunit protein uS2">
    <location>
        <begin position="1"/>
        <end position="330"/>
    </location>
</feature>
<reference key="1">
    <citation type="submission" date="2006-09" db="EMBL/GenBank/DDBJ databases">
        <title>Complete sequence of Rhodopseudomonas palustris BisA53.</title>
        <authorList>
            <consortium name="US DOE Joint Genome Institute"/>
            <person name="Copeland A."/>
            <person name="Lucas S."/>
            <person name="Lapidus A."/>
            <person name="Barry K."/>
            <person name="Detter J.C."/>
            <person name="Glavina del Rio T."/>
            <person name="Hammon N."/>
            <person name="Israni S."/>
            <person name="Dalin E."/>
            <person name="Tice H."/>
            <person name="Pitluck S."/>
            <person name="Chain P."/>
            <person name="Malfatti S."/>
            <person name="Shin M."/>
            <person name="Vergez L."/>
            <person name="Schmutz J."/>
            <person name="Larimer F."/>
            <person name="Land M."/>
            <person name="Hauser L."/>
            <person name="Pelletier D.A."/>
            <person name="Kyrpides N."/>
            <person name="Kim E."/>
            <person name="Harwood C.S."/>
            <person name="Oda Y."/>
            <person name="Richardson P."/>
        </authorList>
    </citation>
    <scope>NUCLEOTIDE SEQUENCE [LARGE SCALE GENOMIC DNA]</scope>
    <source>
        <strain>BisA53</strain>
    </source>
</reference>
<accession>Q07NJ3</accession>
<name>RS2_RHOP5</name>
<sequence>MALPEFSMRQLLEAGVHFGHQSHRWNPKMAEYIFGARNNIHIIDLAQTVPLLHNALKAVSDTVAKGGRVLFVGTKRQAQDVVADAAKRSAQYFVNSRWLGGTLTNWKTISASIKRLRHLDEMLNSGDAGSYTKKERLTLQRERDKLDRSLGGIKDMGGLPDLLFVIDTNKEDIAIQEAQRLGIPVAAIVDTNCDPKGISYLVPGNDDAGRAITLYCDLVARAVIDGLSRAQGDSGYDAGAMAQPLREELPVVAEARFQGLAGPRGVADDLKKLTGVSGAIEKKFNDLGIFHFWQLAELDHDTAHKISEEVGLPSRADAWVAQAKTLTEAE</sequence>
<organism>
    <name type="scientific">Rhodopseudomonas palustris (strain BisA53)</name>
    <dbReference type="NCBI Taxonomy" id="316055"/>
    <lineage>
        <taxon>Bacteria</taxon>
        <taxon>Pseudomonadati</taxon>
        <taxon>Pseudomonadota</taxon>
        <taxon>Alphaproteobacteria</taxon>
        <taxon>Hyphomicrobiales</taxon>
        <taxon>Nitrobacteraceae</taxon>
        <taxon>Rhodopseudomonas</taxon>
    </lineage>
</organism>
<proteinExistence type="inferred from homology"/>